<sequence length="64" mass="6944">MAQEQTKRGGGGGDDDDIAGSTAAGQERREKLTEETDDLLDEIDDVLEENAEDFVRAYVQKGGQ</sequence>
<reference key="1">
    <citation type="journal article" date="2007" name="Proc. Natl. Acad. Sci. U.S.A.">
        <title>Genome plasticity of BCG and impact on vaccine efficacy.</title>
        <authorList>
            <person name="Brosch R."/>
            <person name="Gordon S.V."/>
            <person name="Garnier T."/>
            <person name="Eiglmeier K."/>
            <person name="Frigui W."/>
            <person name="Valenti P."/>
            <person name="Dos Santos S."/>
            <person name="Duthoy S."/>
            <person name="Lacroix C."/>
            <person name="Garcia-Pelayo C."/>
            <person name="Inwald J.K."/>
            <person name="Golby P."/>
            <person name="Garcia J.N."/>
            <person name="Hewinson R.G."/>
            <person name="Behr M.A."/>
            <person name="Quail M.A."/>
            <person name="Churcher C."/>
            <person name="Barrell B.G."/>
            <person name="Parkhill J."/>
            <person name="Cole S.T."/>
        </authorList>
    </citation>
    <scope>NUCLEOTIDE SEQUENCE [LARGE SCALE GENOMIC DNA]</scope>
    <source>
        <strain>BCG / Pasteur 1173P2</strain>
    </source>
</reference>
<gene>
    <name evidence="1" type="primary">pup</name>
    <name type="ordered locus">BCG_2128c</name>
</gene>
<accession>A1KKF4</accession>
<dbReference type="EMBL" id="AM408590">
    <property type="protein sequence ID" value="CAL72116.1"/>
    <property type="molecule type" value="Genomic_DNA"/>
</dbReference>
<dbReference type="RefSeq" id="WP_003411026.1">
    <property type="nucleotide sequence ID" value="NC_008769.1"/>
</dbReference>
<dbReference type="SMR" id="A1KKF4"/>
<dbReference type="KEGG" id="mbb:BCG_2128c"/>
<dbReference type="HOGENOM" id="CLU_183816_1_0_11"/>
<dbReference type="UniPathway" id="UPA00997"/>
<dbReference type="Proteomes" id="UP000001472">
    <property type="component" value="Chromosome"/>
</dbReference>
<dbReference type="GO" id="GO:0070628">
    <property type="term" value="F:proteasome binding"/>
    <property type="evidence" value="ECO:0007669"/>
    <property type="project" value="UniProtKB-UniRule"/>
</dbReference>
<dbReference type="GO" id="GO:0031386">
    <property type="term" value="F:protein tag activity"/>
    <property type="evidence" value="ECO:0007669"/>
    <property type="project" value="UniProtKB-UniRule"/>
</dbReference>
<dbReference type="GO" id="GO:0019941">
    <property type="term" value="P:modification-dependent protein catabolic process"/>
    <property type="evidence" value="ECO:0007669"/>
    <property type="project" value="UniProtKB-UniRule"/>
</dbReference>
<dbReference type="GO" id="GO:0010498">
    <property type="term" value="P:proteasomal protein catabolic process"/>
    <property type="evidence" value="ECO:0007669"/>
    <property type="project" value="UniProtKB-UniRule"/>
</dbReference>
<dbReference type="GO" id="GO:0070490">
    <property type="term" value="P:protein pupylation"/>
    <property type="evidence" value="ECO:0007669"/>
    <property type="project" value="UniProtKB-UniRule"/>
</dbReference>
<dbReference type="HAMAP" id="MF_02106">
    <property type="entry name" value="Pup"/>
    <property type="match status" value="1"/>
</dbReference>
<dbReference type="InterPro" id="IPR008515">
    <property type="entry name" value="Ubiquitin-like_Pup"/>
</dbReference>
<dbReference type="NCBIfam" id="TIGR03687">
    <property type="entry name" value="pupylate_cterm"/>
    <property type="match status" value="1"/>
</dbReference>
<dbReference type="Pfam" id="PF05639">
    <property type="entry name" value="Pup"/>
    <property type="match status" value="1"/>
</dbReference>
<feature type="chain" id="PRO_0000390589" description="Prokaryotic ubiquitin-like protein Pup">
    <location>
        <begin position="1"/>
        <end position="64"/>
    </location>
</feature>
<feature type="region of interest" description="Disordered" evidence="2">
    <location>
        <begin position="1"/>
        <end position="37"/>
    </location>
</feature>
<feature type="region of interest" description="ARC ATPase binding" evidence="1">
    <location>
        <begin position="21"/>
        <end position="58"/>
    </location>
</feature>
<feature type="coiled-coil region" evidence="1">
    <location>
        <begin position="23"/>
        <end position="52"/>
    </location>
</feature>
<feature type="modified residue" description="Deamidated glutamine" evidence="1">
    <location>
        <position position="64"/>
    </location>
</feature>
<feature type="cross-link" description="Isoglutamyl lysine isopeptide (Gln-Lys) (interchain with K-? in acceptor proteins)" evidence="1">
    <location>
        <position position="64"/>
    </location>
</feature>
<organism>
    <name type="scientific">Mycobacterium bovis (strain BCG / Pasteur 1173P2)</name>
    <dbReference type="NCBI Taxonomy" id="410289"/>
    <lineage>
        <taxon>Bacteria</taxon>
        <taxon>Bacillati</taxon>
        <taxon>Actinomycetota</taxon>
        <taxon>Actinomycetes</taxon>
        <taxon>Mycobacteriales</taxon>
        <taxon>Mycobacteriaceae</taxon>
        <taxon>Mycobacterium</taxon>
        <taxon>Mycobacterium tuberculosis complex</taxon>
    </lineage>
</organism>
<protein>
    <recommendedName>
        <fullName evidence="1">Prokaryotic ubiquitin-like protein Pup</fullName>
    </recommendedName>
    <alternativeName>
        <fullName evidence="1">Bacterial ubiquitin-like modifier</fullName>
    </alternativeName>
</protein>
<evidence type="ECO:0000255" key="1">
    <source>
        <dbReference type="HAMAP-Rule" id="MF_02106"/>
    </source>
</evidence>
<evidence type="ECO:0000256" key="2">
    <source>
        <dbReference type="SAM" id="MobiDB-lite"/>
    </source>
</evidence>
<name>PUP_MYCBP</name>
<proteinExistence type="inferred from homology"/>
<comment type="function">
    <text evidence="1">Protein modifier that is covalently attached to lysine residues of substrate proteins, thereby targeting them for proteasomal degradation. The tagging system is termed pupylation.</text>
</comment>
<comment type="pathway">
    <text evidence="1">Protein degradation; proteasomal Pup-dependent pathway.</text>
</comment>
<comment type="subunit">
    <text evidence="1">Strongly interacts with the proteasome-associated ATPase ARC through a hydrophobic interface; the interacting region of Pup lies in its C-terminal half. There is one Pup binding site per ARC hexamer ring.</text>
</comment>
<comment type="domain">
    <text evidence="1">The N-terminal unstructured half of Pup provides a signal required to initiate unfolding and degradation by the proteasome but is not needed for pupylation, while the C-terminal helical half of Pup interacts with ARC to target proteins to the proteasome.</text>
</comment>
<comment type="PTM">
    <text evidence="1">Is modified by deamidation of its C-terminal glutamine to glutamate by the deamidase Dop, a prerequisite to the subsequent pupylation process.</text>
</comment>
<comment type="similarity">
    <text evidence="1">Belongs to the prokaryotic ubiquitin-like protein family.</text>
</comment>
<keyword id="KW-0175">Coiled coil</keyword>
<keyword id="KW-1017">Isopeptide bond</keyword>
<keyword id="KW-0833">Ubl conjugation pathway</keyword>